<sequence length="333" mass="36627">MMEQWLESTPGWSNIALFFGLGALLLAVVLAFVTYGILAERKVMGFMQGRIGPNQVGGRFGLLQTVADVLKLLLKEDTIPKAADRPLYVLAPIIAFVPSFMVLAVLPFTDAFRFADIGVGLLYYIAVSGLTTVGVVAGGWASNNKYALLGGMRAAAQMISYEIPLVMSALGVVLLAGSMNLVDIVAAQKDVWFIFAQPLAFLIFLIAAVAELNRTPFDLPEAESELVAGFHVEYSGFRWAFFMLAEYVYLFAMAALVTILFLGGWHPVAFLGWIPGAVWFALKFCAVVFVLIWFRATFPRVRADQLMEFAWKVLLPLSLVNIVLTAVVKAWFF</sequence>
<dbReference type="EC" id="7.1.1.-" evidence="1"/>
<dbReference type="EMBL" id="BA000043">
    <property type="protein sequence ID" value="BAD77637.1"/>
    <property type="molecule type" value="Genomic_DNA"/>
</dbReference>
<dbReference type="RefSeq" id="WP_011232819.1">
    <property type="nucleotide sequence ID" value="NC_006510.1"/>
</dbReference>
<dbReference type="SMR" id="Q5KUJ9"/>
<dbReference type="STRING" id="235909.GK3352"/>
<dbReference type="GeneID" id="32065236"/>
<dbReference type="KEGG" id="gka:GK3352"/>
<dbReference type="eggNOG" id="COG1005">
    <property type="taxonomic scope" value="Bacteria"/>
</dbReference>
<dbReference type="HOGENOM" id="CLU_015134_0_1_9"/>
<dbReference type="Proteomes" id="UP000001172">
    <property type="component" value="Chromosome"/>
</dbReference>
<dbReference type="GO" id="GO:0005886">
    <property type="term" value="C:plasma membrane"/>
    <property type="evidence" value="ECO:0007669"/>
    <property type="project" value="UniProtKB-SubCell"/>
</dbReference>
<dbReference type="GO" id="GO:0003954">
    <property type="term" value="F:NADH dehydrogenase activity"/>
    <property type="evidence" value="ECO:0007669"/>
    <property type="project" value="TreeGrafter"/>
</dbReference>
<dbReference type="GO" id="GO:0016655">
    <property type="term" value="F:oxidoreductase activity, acting on NAD(P)H, quinone or similar compound as acceptor"/>
    <property type="evidence" value="ECO:0007669"/>
    <property type="project" value="UniProtKB-UniRule"/>
</dbReference>
<dbReference type="GO" id="GO:0048038">
    <property type="term" value="F:quinone binding"/>
    <property type="evidence" value="ECO:0007669"/>
    <property type="project" value="UniProtKB-KW"/>
</dbReference>
<dbReference type="GO" id="GO:0009060">
    <property type="term" value="P:aerobic respiration"/>
    <property type="evidence" value="ECO:0007669"/>
    <property type="project" value="TreeGrafter"/>
</dbReference>
<dbReference type="HAMAP" id="MF_01350">
    <property type="entry name" value="NDH1_NuoH"/>
    <property type="match status" value="1"/>
</dbReference>
<dbReference type="InterPro" id="IPR001694">
    <property type="entry name" value="NADH_UbQ_OxRdtase_su1/FPO"/>
</dbReference>
<dbReference type="InterPro" id="IPR018086">
    <property type="entry name" value="NADH_UbQ_OxRdtase_su1_CS"/>
</dbReference>
<dbReference type="NCBIfam" id="NF004741">
    <property type="entry name" value="PRK06076.1-2"/>
    <property type="match status" value="1"/>
</dbReference>
<dbReference type="PANTHER" id="PTHR11432">
    <property type="entry name" value="NADH DEHYDROGENASE SUBUNIT 1"/>
    <property type="match status" value="1"/>
</dbReference>
<dbReference type="PANTHER" id="PTHR11432:SF3">
    <property type="entry name" value="NADH-UBIQUINONE OXIDOREDUCTASE CHAIN 1"/>
    <property type="match status" value="1"/>
</dbReference>
<dbReference type="Pfam" id="PF00146">
    <property type="entry name" value="NADHdh"/>
    <property type="match status" value="1"/>
</dbReference>
<dbReference type="PROSITE" id="PS00668">
    <property type="entry name" value="COMPLEX1_ND1_2"/>
    <property type="match status" value="1"/>
</dbReference>
<gene>
    <name evidence="1" type="primary">nuoH</name>
    <name type="ordered locus">GK3352</name>
</gene>
<accession>Q5KUJ9</accession>
<name>NUOH_GEOKA</name>
<protein>
    <recommendedName>
        <fullName evidence="1">NADH-quinone oxidoreductase subunit H</fullName>
        <ecNumber evidence="1">7.1.1.-</ecNumber>
    </recommendedName>
    <alternativeName>
        <fullName evidence="1">NADH dehydrogenase I subunit H</fullName>
    </alternativeName>
    <alternativeName>
        <fullName evidence="1">NDH-1 subunit H</fullName>
    </alternativeName>
</protein>
<feature type="chain" id="PRO_0000240073" description="NADH-quinone oxidoreductase subunit H">
    <location>
        <begin position="1"/>
        <end position="333"/>
    </location>
</feature>
<feature type="transmembrane region" description="Helical" evidence="1">
    <location>
        <begin position="15"/>
        <end position="35"/>
    </location>
</feature>
<feature type="transmembrane region" description="Helical" evidence="1">
    <location>
        <begin position="88"/>
        <end position="108"/>
    </location>
</feature>
<feature type="transmembrane region" description="Helical" evidence="1">
    <location>
        <begin position="117"/>
        <end position="137"/>
    </location>
</feature>
<feature type="transmembrane region" description="Helical" evidence="1">
    <location>
        <begin position="165"/>
        <end position="185"/>
    </location>
</feature>
<feature type="transmembrane region" description="Helical" evidence="1">
    <location>
        <begin position="191"/>
        <end position="211"/>
    </location>
</feature>
<feature type="transmembrane region" description="Helical" evidence="1">
    <location>
        <begin position="241"/>
        <end position="261"/>
    </location>
</feature>
<feature type="transmembrane region" description="Helical" evidence="1">
    <location>
        <begin position="274"/>
        <end position="294"/>
    </location>
</feature>
<feature type="transmembrane region" description="Helical" evidence="1">
    <location>
        <begin position="313"/>
        <end position="333"/>
    </location>
</feature>
<proteinExistence type="inferred from homology"/>
<comment type="function">
    <text evidence="1">NDH-1 shuttles electrons from NADH, via FMN and iron-sulfur (Fe-S) centers, to quinones in the respiratory chain. The immediate electron acceptor for the enzyme in this species is believed to be ubiquinone. Couples the redox reaction to proton translocation (for every two electrons transferred, four hydrogen ions are translocated across the cytoplasmic membrane), and thus conserves the redox energy in a proton gradient. This subunit may bind ubiquinone.</text>
</comment>
<comment type="catalytic activity">
    <reaction evidence="1">
        <text>a quinone + NADH + 5 H(+)(in) = a quinol + NAD(+) + 4 H(+)(out)</text>
        <dbReference type="Rhea" id="RHEA:57888"/>
        <dbReference type="ChEBI" id="CHEBI:15378"/>
        <dbReference type="ChEBI" id="CHEBI:24646"/>
        <dbReference type="ChEBI" id="CHEBI:57540"/>
        <dbReference type="ChEBI" id="CHEBI:57945"/>
        <dbReference type="ChEBI" id="CHEBI:132124"/>
    </reaction>
</comment>
<comment type="subunit">
    <text evidence="1">NDH-1 is composed of 14 different subunits. Subunits NuoA, H, J, K, L, M, N constitute the membrane sector of the complex.</text>
</comment>
<comment type="subcellular location">
    <subcellularLocation>
        <location evidence="1">Cell membrane</location>
        <topology evidence="1">Multi-pass membrane protein</topology>
    </subcellularLocation>
</comment>
<comment type="similarity">
    <text evidence="1">Belongs to the complex I subunit 1 family.</text>
</comment>
<organism>
    <name type="scientific">Geobacillus kaustophilus (strain HTA426)</name>
    <dbReference type="NCBI Taxonomy" id="235909"/>
    <lineage>
        <taxon>Bacteria</taxon>
        <taxon>Bacillati</taxon>
        <taxon>Bacillota</taxon>
        <taxon>Bacilli</taxon>
        <taxon>Bacillales</taxon>
        <taxon>Anoxybacillaceae</taxon>
        <taxon>Geobacillus</taxon>
        <taxon>Geobacillus thermoleovorans group</taxon>
    </lineage>
</organism>
<reference key="1">
    <citation type="journal article" date="2004" name="Nucleic Acids Res.">
        <title>Thermoadaptation trait revealed by the genome sequence of thermophilic Geobacillus kaustophilus.</title>
        <authorList>
            <person name="Takami H."/>
            <person name="Takaki Y."/>
            <person name="Chee G.-J."/>
            <person name="Nishi S."/>
            <person name="Shimamura S."/>
            <person name="Suzuki H."/>
            <person name="Matsui S."/>
            <person name="Uchiyama I."/>
        </authorList>
    </citation>
    <scope>NUCLEOTIDE SEQUENCE [LARGE SCALE GENOMIC DNA]</scope>
    <source>
        <strain>HTA426</strain>
    </source>
</reference>
<keyword id="KW-1003">Cell membrane</keyword>
<keyword id="KW-0472">Membrane</keyword>
<keyword id="KW-0520">NAD</keyword>
<keyword id="KW-0874">Quinone</keyword>
<keyword id="KW-1185">Reference proteome</keyword>
<keyword id="KW-1278">Translocase</keyword>
<keyword id="KW-0812">Transmembrane</keyword>
<keyword id="KW-1133">Transmembrane helix</keyword>
<keyword id="KW-0830">Ubiquinone</keyword>
<evidence type="ECO:0000255" key="1">
    <source>
        <dbReference type="HAMAP-Rule" id="MF_01350"/>
    </source>
</evidence>